<comment type="function">
    <text evidence="1">Catalyzes the conversion of uracil and 5-phospho-alpha-D-ribose 1-diphosphate (PRPP) to UMP and diphosphate.</text>
</comment>
<comment type="catalytic activity">
    <reaction>
        <text>UMP + diphosphate = 5-phospho-alpha-D-ribose 1-diphosphate + uracil</text>
        <dbReference type="Rhea" id="RHEA:13017"/>
        <dbReference type="ChEBI" id="CHEBI:17568"/>
        <dbReference type="ChEBI" id="CHEBI:33019"/>
        <dbReference type="ChEBI" id="CHEBI:57865"/>
        <dbReference type="ChEBI" id="CHEBI:58017"/>
        <dbReference type="EC" id="2.4.2.9"/>
    </reaction>
</comment>
<comment type="cofactor">
    <cofactor evidence="1">
        <name>Mg(2+)</name>
        <dbReference type="ChEBI" id="CHEBI:18420"/>
    </cofactor>
    <text evidence="1">Binds 1 Mg(2+) ion per subunit. The magnesium is bound as Mg-PRPP.</text>
</comment>
<comment type="activity regulation">
    <text evidence="1">Allosterically activated by GTP.</text>
</comment>
<comment type="pathway">
    <text>Pyrimidine metabolism; UMP biosynthesis via salvage pathway; UMP from uracil: step 1/1.</text>
</comment>
<comment type="similarity">
    <text evidence="2">Belongs to the UPRTase family.</text>
</comment>
<gene>
    <name type="primary">upp</name>
    <name type="ordered locus">PG_0752</name>
</gene>
<proteinExistence type="inferred from homology"/>
<protein>
    <recommendedName>
        <fullName>Uracil phosphoribosyltransferase</fullName>
        <ecNumber>2.4.2.9</ecNumber>
    </recommendedName>
    <alternativeName>
        <fullName>UMP pyrophosphorylase</fullName>
    </alternativeName>
    <alternativeName>
        <fullName>UPRTase</fullName>
    </alternativeName>
</protein>
<sequence length="216" mass="24371">MEVIHLGAEHSLLNRFVMEMRDVTIQNDRLRFRRNIERVGEVMAYEISKKMTQQVRTVTTPLGEAECSVPQDKVVLATILRAGLPFHHGFLNYFDYCENAFVSAYRKYKDRLNFDIHIEYIASPDITDKVLIISDPMLATGSSMELAYKALLTKGNPKHIHIASIIASQQAVDYIRGVMPDNTTIWIAAIDPTIDEHSYIVPGLGDAGDLAYGEKL</sequence>
<feature type="chain" id="PRO_0000120867" description="Uracil phosphoribosyltransferase">
    <location>
        <begin position="1"/>
        <end position="216"/>
    </location>
</feature>
<feature type="binding site" evidence="1">
    <location>
        <position position="81"/>
    </location>
    <ligand>
        <name>5-phospho-alpha-D-ribose 1-diphosphate</name>
        <dbReference type="ChEBI" id="CHEBI:58017"/>
    </ligand>
</feature>
<feature type="binding site" evidence="1">
    <location>
        <position position="106"/>
    </location>
    <ligand>
        <name>5-phospho-alpha-D-ribose 1-diphosphate</name>
        <dbReference type="ChEBI" id="CHEBI:58017"/>
    </ligand>
</feature>
<feature type="binding site" evidence="1">
    <location>
        <begin position="135"/>
        <end position="143"/>
    </location>
    <ligand>
        <name>5-phospho-alpha-D-ribose 1-diphosphate</name>
        <dbReference type="ChEBI" id="CHEBI:58017"/>
    </ligand>
</feature>
<feature type="binding site" evidence="1">
    <location>
        <position position="200"/>
    </location>
    <ligand>
        <name>uracil</name>
        <dbReference type="ChEBI" id="CHEBI:17568"/>
    </ligand>
</feature>
<feature type="binding site" evidence="1">
    <location>
        <begin position="205"/>
        <end position="207"/>
    </location>
    <ligand>
        <name>uracil</name>
        <dbReference type="ChEBI" id="CHEBI:17568"/>
    </ligand>
</feature>
<feature type="binding site" evidence="1">
    <location>
        <position position="206"/>
    </location>
    <ligand>
        <name>5-phospho-alpha-D-ribose 1-diphosphate</name>
        <dbReference type="ChEBI" id="CHEBI:58017"/>
    </ligand>
</feature>
<accession>P0C939</accession>
<accession>Q9ZNF8</accession>
<name>UPP_PORGI</name>
<organism>
    <name type="scientific">Porphyromonas gingivalis (strain ATCC BAA-308 / W83)</name>
    <dbReference type="NCBI Taxonomy" id="242619"/>
    <lineage>
        <taxon>Bacteria</taxon>
        <taxon>Pseudomonadati</taxon>
        <taxon>Bacteroidota</taxon>
        <taxon>Bacteroidia</taxon>
        <taxon>Bacteroidales</taxon>
        <taxon>Porphyromonadaceae</taxon>
        <taxon>Porphyromonas</taxon>
    </lineage>
</organism>
<dbReference type="EC" id="2.4.2.9"/>
<dbReference type="EMBL" id="AE015924">
    <property type="protein sequence ID" value="AAQ65919.1"/>
    <property type="molecule type" value="Genomic_DNA"/>
</dbReference>
<dbReference type="RefSeq" id="WP_004585294.1">
    <property type="nucleotide sequence ID" value="NC_002950.2"/>
</dbReference>
<dbReference type="SMR" id="P0C939"/>
<dbReference type="STRING" id="242619.PG_0752"/>
<dbReference type="EnsemblBacteria" id="AAQ65919">
    <property type="protein sequence ID" value="AAQ65919"/>
    <property type="gene ID" value="PG_0752"/>
</dbReference>
<dbReference type="GeneID" id="29255998"/>
<dbReference type="KEGG" id="pgi:PG_0752"/>
<dbReference type="eggNOG" id="COG0035">
    <property type="taxonomic scope" value="Bacteria"/>
</dbReference>
<dbReference type="HOGENOM" id="CLU_067096_2_0_10"/>
<dbReference type="UniPathway" id="UPA00574">
    <property type="reaction ID" value="UER00636"/>
</dbReference>
<dbReference type="Proteomes" id="UP000000588">
    <property type="component" value="Chromosome"/>
</dbReference>
<dbReference type="GO" id="GO:0005525">
    <property type="term" value="F:GTP binding"/>
    <property type="evidence" value="ECO:0007669"/>
    <property type="project" value="UniProtKB-KW"/>
</dbReference>
<dbReference type="GO" id="GO:0004845">
    <property type="term" value="F:uracil phosphoribosyltransferase activity"/>
    <property type="evidence" value="ECO:0007669"/>
    <property type="project" value="UniProtKB-EC"/>
</dbReference>
<dbReference type="GO" id="GO:0044206">
    <property type="term" value="P:UMP salvage"/>
    <property type="evidence" value="ECO:0007669"/>
    <property type="project" value="UniProtKB-UniPathway"/>
</dbReference>
<dbReference type="CDD" id="cd06223">
    <property type="entry name" value="PRTases_typeI"/>
    <property type="match status" value="1"/>
</dbReference>
<dbReference type="FunFam" id="3.40.50.2020:FF:000023">
    <property type="entry name" value="Probable uracil phosphoribosyltransferase"/>
    <property type="match status" value="1"/>
</dbReference>
<dbReference type="Gene3D" id="3.40.50.2020">
    <property type="match status" value="1"/>
</dbReference>
<dbReference type="InterPro" id="IPR000836">
    <property type="entry name" value="PRibTrfase_dom"/>
</dbReference>
<dbReference type="InterPro" id="IPR029057">
    <property type="entry name" value="PRTase-like"/>
</dbReference>
<dbReference type="NCBIfam" id="NF001097">
    <property type="entry name" value="PRK00129.1"/>
    <property type="match status" value="1"/>
</dbReference>
<dbReference type="PANTHER" id="PTHR43363">
    <property type="entry name" value="HYPOXANTHINE PHOSPHORIBOSYLTRANSFERASE"/>
    <property type="match status" value="1"/>
</dbReference>
<dbReference type="PANTHER" id="PTHR43363:SF1">
    <property type="entry name" value="HYPOXANTHINE-GUANINE PHOSPHORIBOSYLTRANSFERASE"/>
    <property type="match status" value="1"/>
</dbReference>
<dbReference type="Pfam" id="PF14681">
    <property type="entry name" value="UPRTase"/>
    <property type="match status" value="1"/>
</dbReference>
<dbReference type="SUPFAM" id="SSF53271">
    <property type="entry name" value="PRTase-like"/>
    <property type="match status" value="1"/>
</dbReference>
<reference key="1">
    <citation type="journal article" date="2003" name="J. Bacteriol.">
        <title>Complete genome sequence of the oral pathogenic bacterium Porphyromonas gingivalis strain W83.</title>
        <authorList>
            <person name="Nelson K.E."/>
            <person name="Fleischmann R.D."/>
            <person name="DeBoy R.T."/>
            <person name="Paulsen I.T."/>
            <person name="Fouts D.E."/>
            <person name="Eisen J.A."/>
            <person name="Daugherty S.C."/>
            <person name="Dodson R.J."/>
            <person name="Durkin A.S."/>
            <person name="Gwinn M.L."/>
            <person name="Haft D.H."/>
            <person name="Kolonay J.F."/>
            <person name="Nelson W.C."/>
            <person name="Mason T.M."/>
            <person name="Tallon L."/>
            <person name="Gray J."/>
            <person name="Granger D."/>
            <person name="Tettelin H."/>
            <person name="Dong H."/>
            <person name="Galvin J.L."/>
            <person name="Duncan M.J."/>
            <person name="Dewhirst F.E."/>
            <person name="Fraser C.M."/>
        </authorList>
    </citation>
    <scope>NUCLEOTIDE SEQUENCE [LARGE SCALE GENOMIC DNA]</scope>
    <source>
        <strain>ATCC BAA-308 / W83</strain>
    </source>
</reference>
<evidence type="ECO:0000250" key="1"/>
<evidence type="ECO:0000305" key="2"/>
<keyword id="KW-0021">Allosteric enzyme</keyword>
<keyword id="KW-0328">Glycosyltransferase</keyword>
<keyword id="KW-0342">GTP-binding</keyword>
<keyword id="KW-0460">Magnesium</keyword>
<keyword id="KW-0547">Nucleotide-binding</keyword>
<keyword id="KW-1185">Reference proteome</keyword>
<keyword id="KW-0808">Transferase</keyword>